<accession>A1JMI5</accession>
<protein>
    <recommendedName>
        <fullName evidence="1">Cytidylate kinase</fullName>
        <shortName evidence="1">CK</shortName>
        <ecNumber evidence="1">2.7.4.25</ecNumber>
    </recommendedName>
    <alternativeName>
        <fullName evidence="1">Cytidine monophosphate kinase</fullName>
        <shortName evidence="1">CMP kinase</shortName>
    </alternativeName>
</protein>
<keyword id="KW-0067">ATP-binding</keyword>
<keyword id="KW-0963">Cytoplasm</keyword>
<keyword id="KW-0418">Kinase</keyword>
<keyword id="KW-0547">Nucleotide-binding</keyword>
<keyword id="KW-0808">Transferase</keyword>
<sequence length="230" mass="25171">MTASAPVITVDGPSGAGKGTLCKALAESLDWRLLDSGAIYRVLALAALHHQVDISTEEALVPLAAHLDVRFVSQNGQLKVILEGEDVSNEIRTETVGNTASQAAAFPRVREALLRRQRAFREPPGLIADGRDMGTVVFPDAPVKIFLDASSQERAHRRMLQLQEKGFNVNFERLLSEIQERDSRDRNRAIAPLVPATDALVLDSTSMSIEQVIEQALAYAQRILALPLKK</sequence>
<gene>
    <name evidence="1" type="primary">cmk</name>
    <name type="ordered locus">YE1539</name>
</gene>
<reference key="1">
    <citation type="journal article" date="2006" name="PLoS Genet.">
        <title>The complete genome sequence and comparative genome analysis of the high pathogenicity Yersinia enterocolitica strain 8081.</title>
        <authorList>
            <person name="Thomson N.R."/>
            <person name="Howard S."/>
            <person name="Wren B.W."/>
            <person name="Holden M.T.G."/>
            <person name="Crossman L."/>
            <person name="Challis G.L."/>
            <person name="Churcher C."/>
            <person name="Mungall K."/>
            <person name="Brooks K."/>
            <person name="Chillingworth T."/>
            <person name="Feltwell T."/>
            <person name="Abdellah Z."/>
            <person name="Hauser H."/>
            <person name="Jagels K."/>
            <person name="Maddison M."/>
            <person name="Moule S."/>
            <person name="Sanders M."/>
            <person name="Whitehead S."/>
            <person name="Quail M.A."/>
            <person name="Dougan G."/>
            <person name="Parkhill J."/>
            <person name="Prentice M.B."/>
        </authorList>
    </citation>
    <scope>NUCLEOTIDE SEQUENCE [LARGE SCALE GENOMIC DNA]</scope>
    <source>
        <strain>NCTC 13174 / 8081</strain>
    </source>
</reference>
<proteinExistence type="inferred from homology"/>
<name>KCY_YERE8</name>
<comment type="catalytic activity">
    <reaction evidence="1">
        <text>CMP + ATP = CDP + ADP</text>
        <dbReference type="Rhea" id="RHEA:11600"/>
        <dbReference type="ChEBI" id="CHEBI:30616"/>
        <dbReference type="ChEBI" id="CHEBI:58069"/>
        <dbReference type="ChEBI" id="CHEBI:60377"/>
        <dbReference type="ChEBI" id="CHEBI:456216"/>
        <dbReference type="EC" id="2.7.4.25"/>
    </reaction>
</comment>
<comment type="catalytic activity">
    <reaction evidence="1">
        <text>dCMP + ATP = dCDP + ADP</text>
        <dbReference type="Rhea" id="RHEA:25094"/>
        <dbReference type="ChEBI" id="CHEBI:30616"/>
        <dbReference type="ChEBI" id="CHEBI:57566"/>
        <dbReference type="ChEBI" id="CHEBI:58593"/>
        <dbReference type="ChEBI" id="CHEBI:456216"/>
        <dbReference type="EC" id="2.7.4.25"/>
    </reaction>
</comment>
<comment type="subcellular location">
    <subcellularLocation>
        <location evidence="1">Cytoplasm</location>
    </subcellularLocation>
</comment>
<comment type="similarity">
    <text evidence="1">Belongs to the cytidylate kinase family. Type 1 subfamily.</text>
</comment>
<organism>
    <name type="scientific">Yersinia enterocolitica serotype O:8 / biotype 1B (strain NCTC 13174 / 8081)</name>
    <dbReference type="NCBI Taxonomy" id="393305"/>
    <lineage>
        <taxon>Bacteria</taxon>
        <taxon>Pseudomonadati</taxon>
        <taxon>Pseudomonadota</taxon>
        <taxon>Gammaproteobacteria</taxon>
        <taxon>Enterobacterales</taxon>
        <taxon>Yersiniaceae</taxon>
        <taxon>Yersinia</taxon>
    </lineage>
</organism>
<feature type="chain" id="PRO_1000048316" description="Cytidylate kinase">
    <location>
        <begin position="1"/>
        <end position="230"/>
    </location>
</feature>
<feature type="binding site" evidence="1">
    <location>
        <begin position="12"/>
        <end position="20"/>
    </location>
    <ligand>
        <name>ATP</name>
        <dbReference type="ChEBI" id="CHEBI:30616"/>
    </ligand>
</feature>
<dbReference type="EC" id="2.7.4.25" evidence="1"/>
<dbReference type="EMBL" id="AM286415">
    <property type="protein sequence ID" value="CAL11618.1"/>
    <property type="molecule type" value="Genomic_DNA"/>
</dbReference>
<dbReference type="RefSeq" id="WP_005171002.1">
    <property type="nucleotide sequence ID" value="NC_008800.1"/>
</dbReference>
<dbReference type="RefSeq" id="YP_001005834.1">
    <property type="nucleotide sequence ID" value="NC_008800.1"/>
</dbReference>
<dbReference type="SMR" id="A1JMI5"/>
<dbReference type="KEGG" id="yen:YE1539"/>
<dbReference type="PATRIC" id="fig|393305.7.peg.1666"/>
<dbReference type="eggNOG" id="COG0283">
    <property type="taxonomic scope" value="Bacteria"/>
</dbReference>
<dbReference type="HOGENOM" id="CLU_079959_0_2_6"/>
<dbReference type="OrthoDB" id="9807434at2"/>
<dbReference type="Proteomes" id="UP000000642">
    <property type="component" value="Chromosome"/>
</dbReference>
<dbReference type="GO" id="GO:0005829">
    <property type="term" value="C:cytosol"/>
    <property type="evidence" value="ECO:0007669"/>
    <property type="project" value="TreeGrafter"/>
</dbReference>
<dbReference type="GO" id="GO:0005524">
    <property type="term" value="F:ATP binding"/>
    <property type="evidence" value="ECO:0007669"/>
    <property type="project" value="UniProtKB-UniRule"/>
</dbReference>
<dbReference type="GO" id="GO:0036430">
    <property type="term" value="F:CMP kinase activity"/>
    <property type="evidence" value="ECO:0007669"/>
    <property type="project" value="RHEA"/>
</dbReference>
<dbReference type="GO" id="GO:0036431">
    <property type="term" value="F:dCMP kinase activity"/>
    <property type="evidence" value="ECO:0007669"/>
    <property type="project" value="RHEA"/>
</dbReference>
<dbReference type="GO" id="GO:0015949">
    <property type="term" value="P:nucleobase-containing small molecule interconversion"/>
    <property type="evidence" value="ECO:0007669"/>
    <property type="project" value="TreeGrafter"/>
</dbReference>
<dbReference type="GO" id="GO:0006220">
    <property type="term" value="P:pyrimidine nucleotide metabolic process"/>
    <property type="evidence" value="ECO:0007669"/>
    <property type="project" value="UniProtKB-UniRule"/>
</dbReference>
<dbReference type="CDD" id="cd02020">
    <property type="entry name" value="CMPK"/>
    <property type="match status" value="1"/>
</dbReference>
<dbReference type="FunFam" id="3.40.50.300:FF:000262">
    <property type="entry name" value="Cytidylate kinase"/>
    <property type="match status" value="1"/>
</dbReference>
<dbReference type="Gene3D" id="3.40.50.300">
    <property type="entry name" value="P-loop containing nucleotide triphosphate hydrolases"/>
    <property type="match status" value="1"/>
</dbReference>
<dbReference type="HAMAP" id="MF_00238">
    <property type="entry name" value="Cytidyl_kinase_type1"/>
    <property type="match status" value="1"/>
</dbReference>
<dbReference type="InterPro" id="IPR003136">
    <property type="entry name" value="Cytidylate_kin"/>
</dbReference>
<dbReference type="InterPro" id="IPR011994">
    <property type="entry name" value="Cytidylate_kinase_dom"/>
</dbReference>
<dbReference type="InterPro" id="IPR027417">
    <property type="entry name" value="P-loop_NTPase"/>
</dbReference>
<dbReference type="NCBIfam" id="TIGR00017">
    <property type="entry name" value="cmk"/>
    <property type="match status" value="1"/>
</dbReference>
<dbReference type="PANTHER" id="PTHR21299:SF2">
    <property type="entry name" value="CYTIDYLATE KINASE"/>
    <property type="match status" value="1"/>
</dbReference>
<dbReference type="PANTHER" id="PTHR21299">
    <property type="entry name" value="CYTIDYLATE KINASE/PANTOATE-BETA-ALANINE LIGASE"/>
    <property type="match status" value="1"/>
</dbReference>
<dbReference type="Pfam" id="PF02224">
    <property type="entry name" value="Cytidylate_kin"/>
    <property type="match status" value="1"/>
</dbReference>
<dbReference type="SUPFAM" id="SSF52540">
    <property type="entry name" value="P-loop containing nucleoside triphosphate hydrolases"/>
    <property type="match status" value="1"/>
</dbReference>
<evidence type="ECO:0000255" key="1">
    <source>
        <dbReference type="HAMAP-Rule" id="MF_00238"/>
    </source>
</evidence>